<sequence length="261" mass="29886">MTHQTHAYHMVNPSPWPLTGALSALLMTSGLIMWFHFNSTTLLMLGLTTNMLTMYQWWRDVIRESTFQGHHTPNVQKGLRYGMILFIISEVLFFTGFFWAFYHSSLAPTPELGGCWPPTGIHPLNPLEVPLLNTSVLLASGVSITWAHHSLMEGNRNHMLQALFITIALGVYFTLLQASEYYEAPFTISDGVYGSTFFVATGFHGLHVIIGSTFLIVCFFRQLKFHFTSSHHFGFEAAAWYWHFVDVVWLFLYVSIYWWGS</sequence>
<protein>
    <recommendedName>
        <fullName>Cytochrome c oxidase subunit 3</fullName>
        <ecNumber>7.1.1.9</ecNumber>
    </recommendedName>
    <alternativeName>
        <fullName>Cytochrome c oxidase polypeptide III</fullName>
    </alternativeName>
</protein>
<reference key="1">
    <citation type="journal article" date="1999" name="Mol. Phylogenet. Evol.">
        <title>Phylogenetic relationships in the bovid subfamily Antilopinae based on mitochondrial DNA sequences.</title>
        <authorList>
            <person name="Rebholz W.E.R."/>
            <person name="Harley E.H."/>
        </authorList>
    </citation>
    <scope>NUCLEOTIDE SEQUENCE [GENOMIC DNA]</scope>
    <source>
        <strain>Ssp. shikarii</strain>
    </source>
</reference>
<feature type="chain" id="PRO_0000183775" description="Cytochrome c oxidase subunit 3">
    <location>
        <begin position="1"/>
        <end position="261"/>
    </location>
</feature>
<feature type="topological domain" description="Mitochondrial matrix" evidence="1">
    <location>
        <begin position="1"/>
        <end position="15"/>
    </location>
</feature>
<feature type="transmembrane region" description="Helical; Name=I" evidence="1">
    <location>
        <begin position="16"/>
        <end position="34"/>
    </location>
</feature>
<feature type="topological domain" description="Mitochondrial intermembrane" evidence="1">
    <location>
        <begin position="35"/>
        <end position="40"/>
    </location>
</feature>
<feature type="transmembrane region" description="Helical; Name=II" evidence="1">
    <location>
        <begin position="41"/>
        <end position="66"/>
    </location>
</feature>
<feature type="topological domain" description="Mitochondrial matrix" evidence="1">
    <location>
        <begin position="67"/>
        <end position="72"/>
    </location>
</feature>
<feature type="transmembrane region" description="Helical; Name=III" evidence="1">
    <location>
        <begin position="73"/>
        <end position="105"/>
    </location>
</feature>
<feature type="topological domain" description="Mitochondrial intermembrane" evidence="1">
    <location>
        <begin position="106"/>
        <end position="128"/>
    </location>
</feature>
<feature type="transmembrane region" description="Helical; Name=IV" evidence="1">
    <location>
        <begin position="129"/>
        <end position="152"/>
    </location>
</feature>
<feature type="topological domain" description="Mitochondrial matrix" evidence="1">
    <location>
        <begin position="153"/>
        <end position="155"/>
    </location>
</feature>
<feature type="transmembrane region" description="Helical; Name=V" evidence="1">
    <location>
        <begin position="156"/>
        <end position="183"/>
    </location>
</feature>
<feature type="topological domain" description="Mitochondrial intermembrane" evidence="1">
    <location>
        <begin position="184"/>
        <end position="190"/>
    </location>
</feature>
<feature type="transmembrane region" description="Helical; Name=VI" evidence="1">
    <location>
        <begin position="191"/>
        <end position="223"/>
    </location>
</feature>
<feature type="topological domain" description="Mitochondrial matrix" evidence="1">
    <location>
        <begin position="224"/>
        <end position="232"/>
    </location>
</feature>
<feature type="transmembrane region" description="Helical; Name=VII" evidence="1">
    <location>
        <begin position="233"/>
        <end position="256"/>
    </location>
</feature>
<feature type="topological domain" description="Mitochondrial intermembrane" evidence="1">
    <location>
        <begin position="257"/>
        <end position="261"/>
    </location>
</feature>
<geneLocation type="mitochondrion"/>
<accession>P68531</accession>
<accession>O47712</accession>
<accession>O48346</accession>
<accession>O48347</accession>
<organism>
    <name type="scientific">Gazella bennettii</name>
    <name type="common">Chinkara</name>
    <name type="synonym">Indian gazelle</name>
    <dbReference type="NCBI Taxonomy" id="69300"/>
    <lineage>
        <taxon>Eukaryota</taxon>
        <taxon>Metazoa</taxon>
        <taxon>Chordata</taxon>
        <taxon>Craniata</taxon>
        <taxon>Vertebrata</taxon>
        <taxon>Euteleostomi</taxon>
        <taxon>Mammalia</taxon>
        <taxon>Eutheria</taxon>
        <taxon>Laurasiatheria</taxon>
        <taxon>Artiodactyla</taxon>
        <taxon>Ruminantia</taxon>
        <taxon>Pecora</taxon>
        <taxon>Bovidae</taxon>
        <taxon>Antilopinae</taxon>
        <taxon>Gazella</taxon>
    </lineage>
</organism>
<evidence type="ECO:0000250" key="1">
    <source>
        <dbReference type="UniProtKB" id="P00415"/>
    </source>
</evidence>
<evidence type="ECO:0000250" key="2">
    <source>
        <dbReference type="UniProtKB" id="P00420"/>
    </source>
</evidence>
<evidence type="ECO:0000305" key="3"/>
<name>COX3_GAZBE</name>
<gene>
    <name type="primary">MT-CO3</name>
    <name type="synonym">COIII</name>
    <name type="synonym">COXIII</name>
    <name type="synonym">MTCO3</name>
</gene>
<comment type="function">
    <text evidence="2">Component of the cytochrome c oxidase, the last enzyme in the mitochondrial electron transport chain which drives oxidative phosphorylation. The respiratory chain contains 3 multisubunit complexes succinate dehydrogenase (complex II, CII), ubiquinol-cytochrome c oxidoreductase (cytochrome b-c1 complex, complex III, CIII) and cytochrome c oxidase (complex IV, CIV), that cooperate to transfer electrons derived from NADH and succinate to molecular oxygen, creating an electrochemical gradient over the inner membrane that drives transmembrane transport and the ATP synthase. Cytochrome c oxidase is the component of the respiratory chain that catalyzes the reduction of oxygen to water. Electrons originating from reduced cytochrome c in the intermembrane space (IMS) are transferred via the dinuclear copper A center (CU(A)) of subunit 2 and heme A of subunit 1 to the active site in subunit 1, a binuclear center (BNC) formed by heme A3 and copper B (CU(B)). The BNC reduces molecular oxygen to 2 water molecules using 4 electrons from cytochrome c in the IMS and 4 protons from the mitochondrial matrix.</text>
</comment>
<comment type="catalytic activity">
    <reaction evidence="2">
        <text>4 Fe(II)-[cytochrome c] + O2 + 8 H(+)(in) = 4 Fe(III)-[cytochrome c] + 2 H2O + 4 H(+)(out)</text>
        <dbReference type="Rhea" id="RHEA:11436"/>
        <dbReference type="Rhea" id="RHEA-COMP:10350"/>
        <dbReference type="Rhea" id="RHEA-COMP:14399"/>
        <dbReference type="ChEBI" id="CHEBI:15377"/>
        <dbReference type="ChEBI" id="CHEBI:15378"/>
        <dbReference type="ChEBI" id="CHEBI:15379"/>
        <dbReference type="ChEBI" id="CHEBI:29033"/>
        <dbReference type="ChEBI" id="CHEBI:29034"/>
        <dbReference type="EC" id="7.1.1.9"/>
    </reaction>
    <physiologicalReaction direction="left-to-right" evidence="2">
        <dbReference type="Rhea" id="RHEA:11437"/>
    </physiologicalReaction>
</comment>
<comment type="subunit">
    <text evidence="1">Component of the cytochrome c oxidase (complex IV, CIV), a multisubunit enzyme composed of 14 subunits. The complex is composed of a catalytic core of 3 subunits MT-CO1, MT-CO2 and MT-CO3, encoded in the mitochondrial DNA, and 11 supernumerary subunits COX4I, COX5A, COX5B, COX6A, COX6B, COX6C, COX7A, COX7B, COX7C, COX8 and NDUFA4, which are encoded in the nuclear genome. The complex exists as a monomer or a dimer and forms supercomplexes (SCs) in the inner mitochondrial membrane with NADH-ubiquinone oxidoreductase (complex I, CI) and ubiquinol-cytochrome c oxidoreductase (cytochrome b-c1 complex, complex III, CIII), resulting in different assemblies (supercomplex SCI(1)III(2)IV(1) and megacomplex MCI(2)III(2)IV(2)).</text>
</comment>
<comment type="subcellular location">
    <subcellularLocation>
        <location evidence="1">Mitochondrion inner membrane</location>
        <topology evidence="1">Multi-pass membrane protein</topology>
    </subcellularLocation>
</comment>
<comment type="similarity">
    <text evidence="3">Belongs to the cytochrome c oxidase subunit 3 family.</text>
</comment>
<dbReference type="EC" id="7.1.1.9"/>
<dbReference type="EMBL" id="AF030479">
    <property type="protein sequence ID" value="AAB93618.1"/>
    <property type="molecule type" value="Genomic_DNA"/>
</dbReference>
<dbReference type="EMBL" id="AF030480">
    <property type="protein sequence ID" value="AAB93619.1"/>
    <property type="molecule type" value="Genomic_DNA"/>
</dbReference>
<dbReference type="SMR" id="P68531"/>
<dbReference type="CTD" id="4514"/>
<dbReference type="GO" id="GO:0005743">
    <property type="term" value="C:mitochondrial inner membrane"/>
    <property type="evidence" value="ECO:0007669"/>
    <property type="project" value="UniProtKB-SubCell"/>
</dbReference>
<dbReference type="GO" id="GO:0045277">
    <property type="term" value="C:respiratory chain complex IV"/>
    <property type="evidence" value="ECO:0000250"/>
    <property type="project" value="UniProtKB"/>
</dbReference>
<dbReference type="GO" id="GO:0004129">
    <property type="term" value="F:cytochrome-c oxidase activity"/>
    <property type="evidence" value="ECO:0007669"/>
    <property type="project" value="UniProtKB-EC"/>
</dbReference>
<dbReference type="GO" id="GO:0006123">
    <property type="term" value="P:mitochondrial electron transport, cytochrome c to oxygen"/>
    <property type="evidence" value="ECO:0007669"/>
    <property type="project" value="TreeGrafter"/>
</dbReference>
<dbReference type="GO" id="GO:0008535">
    <property type="term" value="P:respiratory chain complex IV assembly"/>
    <property type="evidence" value="ECO:0000250"/>
    <property type="project" value="UniProtKB"/>
</dbReference>
<dbReference type="CDD" id="cd01665">
    <property type="entry name" value="Cyt_c_Oxidase_III"/>
    <property type="match status" value="1"/>
</dbReference>
<dbReference type="FunFam" id="1.10.287.70:FF:000048">
    <property type="entry name" value="Cytochrome c oxidase subunit 3"/>
    <property type="match status" value="1"/>
</dbReference>
<dbReference type="FunFam" id="1.20.120.80:FF:000002">
    <property type="entry name" value="Cytochrome c oxidase subunit 3"/>
    <property type="match status" value="1"/>
</dbReference>
<dbReference type="Gene3D" id="1.10.287.70">
    <property type="match status" value="1"/>
</dbReference>
<dbReference type="Gene3D" id="1.20.120.80">
    <property type="entry name" value="Cytochrome c oxidase, subunit III, four-helix bundle"/>
    <property type="match status" value="1"/>
</dbReference>
<dbReference type="InterPro" id="IPR024791">
    <property type="entry name" value="Cyt_c/ubiquinol_Oxase_su3"/>
</dbReference>
<dbReference type="InterPro" id="IPR033945">
    <property type="entry name" value="Cyt_c_oxase_su3_dom"/>
</dbReference>
<dbReference type="InterPro" id="IPR000298">
    <property type="entry name" value="Cyt_c_oxidase-like_su3"/>
</dbReference>
<dbReference type="InterPro" id="IPR035973">
    <property type="entry name" value="Cyt_c_oxidase_su3-like_sf"/>
</dbReference>
<dbReference type="InterPro" id="IPR013833">
    <property type="entry name" value="Cyt_c_oxidase_su3_a-hlx"/>
</dbReference>
<dbReference type="PANTHER" id="PTHR11403:SF7">
    <property type="entry name" value="CYTOCHROME C OXIDASE SUBUNIT 3"/>
    <property type="match status" value="1"/>
</dbReference>
<dbReference type="PANTHER" id="PTHR11403">
    <property type="entry name" value="CYTOCHROME C OXIDASE SUBUNIT III"/>
    <property type="match status" value="1"/>
</dbReference>
<dbReference type="Pfam" id="PF00510">
    <property type="entry name" value="COX3"/>
    <property type="match status" value="1"/>
</dbReference>
<dbReference type="SUPFAM" id="SSF81452">
    <property type="entry name" value="Cytochrome c oxidase subunit III-like"/>
    <property type="match status" value="1"/>
</dbReference>
<dbReference type="PROSITE" id="PS50253">
    <property type="entry name" value="COX3"/>
    <property type="match status" value="1"/>
</dbReference>
<proteinExistence type="inferred from homology"/>
<keyword id="KW-0472">Membrane</keyword>
<keyword id="KW-0496">Mitochondrion</keyword>
<keyword id="KW-0999">Mitochondrion inner membrane</keyword>
<keyword id="KW-1278">Translocase</keyword>
<keyword id="KW-0812">Transmembrane</keyword>
<keyword id="KW-1133">Transmembrane helix</keyword>